<sequence length="83" mass="9339">MASPIPVGVTKEQAFSMAQTEMEYRVELFNKLAQTCFNKCVDKRYKEAELNMGENSCIDRCVSKYWQVNGMVGQLLSAGKPPV</sequence>
<reference key="1">
    <citation type="journal article" date="1999" name="FEBS Lett.">
        <title>The mitochondrial TIM22 preprotein translocase is highly conserved throughout the eukaryotic kingdom.</title>
        <authorList>
            <person name="Bauer M.F."/>
            <person name="Rothbauer U."/>
            <person name="Muehlenbein N."/>
            <person name="Smith R.J.H."/>
            <person name="Gerbitz K.-D."/>
            <person name="Neupert W."/>
            <person name="Brunner M."/>
            <person name="Hofmann S."/>
        </authorList>
    </citation>
    <scope>NUCLEOTIDE SEQUENCE [MRNA]</scope>
</reference>
<reference key="2">
    <citation type="journal article" date="1999" name="Nature">
        <title>Sequence and analysis of chromosome 2 of the plant Arabidopsis thaliana.</title>
        <authorList>
            <person name="Lin X."/>
            <person name="Kaul S."/>
            <person name="Rounsley S.D."/>
            <person name="Shea T.P."/>
            <person name="Benito M.-I."/>
            <person name="Town C.D."/>
            <person name="Fujii C.Y."/>
            <person name="Mason T.M."/>
            <person name="Bowman C.L."/>
            <person name="Barnstead M.E."/>
            <person name="Feldblyum T.V."/>
            <person name="Buell C.R."/>
            <person name="Ketchum K.A."/>
            <person name="Lee J.J."/>
            <person name="Ronning C.M."/>
            <person name="Koo H.L."/>
            <person name="Moffat K.S."/>
            <person name="Cronin L.A."/>
            <person name="Shen M."/>
            <person name="Pai G."/>
            <person name="Van Aken S."/>
            <person name="Umayam L."/>
            <person name="Tallon L.J."/>
            <person name="Gill J.E."/>
            <person name="Adams M.D."/>
            <person name="Carrera A.J."/>
            <person name="Creasy T.H."/>
            <person name="Goodman H.M."/>
            <person name="Somerville C.R."/>
            <person name="Copenhaver G.P."/>
            <person name="Preuss D."/>
            <person name="Nierman W.C."/>
            <person name="White O."/>
            <person name="Eisen J.A."/>
            <person name="Salzberg S.L."/>
            <person name="Fraser C.M."/>
            <person name="Venter J.C."/>
        </authorList>
    </citation>
    <scope>NUCLEOTIDE SEQUENCE [LARGE SCALE GENOMIC DNA]</scope>
    <source>
        <strain>cv. Columbia</strain>
    </source>
</reference>
<reference key="3">
    <citation type="journal article" date="2017" name="Plant J.">
        <title>Araport11: a complete reannotation of the Arabidopsis thaliana reference genome.</title>
        <authorList>
            <person name="Cheng C.Y."/>
            <person name="Krishnakumar V."/>
            <person name="Chan A.P."/>
            <person name="Thibaud-Nissen F."/>
            <person name="Schobel S."/>
            <person name="Town C.D."/>
        </authorList>
    </citation>
    <scope>GENOME REANNOTATION</scope>
    <source>
        <strain>cv. Columbia</strain>
    </source>
</reference>
<reference key="4">
    <citation type="journal article" date="2003" name="Science">
        <title>Empirical analysis of transcriptional activity in the Arabidopsis genome.</title>
        <authorList>
            <person name="Yamada K."/>
            <person name="Lim J."/>
            <person name="Dale J.M."/>
            <person name="Chen H."/>
            <person name="Shinn P."/>
            <person name="Palm C.J."/>
            <person name="Southwick A.M."/>
            <person name="Wu H.C."/>
            <person name="Kim C.J."/>
            <person name="Nguyen M."/>
            <person name="Pham P.K."/>
            <person name="Cheuk R.F."/>
            <person name="Karlin-Newmann G."/>
            <person name="Liu S.X."/>
            <person name="Lam B."/>
            <person name="Sakano H."/>
            <person name="Wu T."/>
            <person name="Yu G."/>
            <person name="Miranda M."/>
            <person name="Quach H.L."/>
            <person name="Tripp M."/>
            <person name="Chang C.H."/>
            <person name="Lee J.M."/>
            <person name="Toriumi M.J."/>
            <person name="Chan M.M."/>
            <person name="Tang C.C."/>
            <person name="Onodera C.S."/>
            <person name="Deng J.M."/>
            <person name="Akiyama K."/>
            <person name="Ansari Y."/>
            <person name="Arakawa T."/>
            <person name="Banh J."/>
            <person name="Banno F."/>
            <person name="Bowser L."/>
            <person name="Brooks S.Y."/>
            <person name="Carninci P."/>
            <person name="Chao Q."/>
            <person name="Choy N."/>
            <person name="Enju A."/>
            <person name="Goldsmith A.D."/>
            <person name="Gurjal M."/>
            <person name="Hansen N.F."/>
            <person name="Hayashizaki Y."/>
            <person name="Johnson-Hopson C."/>
            <person name="Hsuan V.W."/>
            <person name="Iida K."/>
            <person name="Karnes M."/>
            <person name="Khan S."/>
            <person name="Koesema E."/>
            <person name="Ishida J."/>
            <person name="Jiang P.X."/>
            <person name="Jones T."/>
            <person name="Kawai J."/>
            <person name="Kamiya A."/>
            <person name="Meyers C."/>
            <person name="Nakajima M."/>
            <person name="Narusaka M."/>
            <person name="Seki M."/>
            <person name="Sakurai T."/>
            <person name="Satou M."/>
            <person name="Tamse R."/>
            <person name="Vaysberg M."/>
            <person name="Wallender E.K."/>
            <person name="Wong C."/>
            <person name="Yamamura Y."/>
            <person name="Yuan S."/>
            <person name="Shinozaki K."/>
            <person name="Davis R.W."/>
            <person name="Theologis A."/>
            <person name="Ecker J.R."/>
        </authorList>
    </citation>
    <scope>NUCLEOTIDE SEQUENCE [LARGE SCALE MRNA]</scope>
    <source>
        <strain>cv. Columbia</strain>
    </source>
</reference>
<reference key="5">
    <citation type="journal article" date="2004" name="Plant Physiol.">
        <title>A transcriptomic and proteomic characterization of the Arabidopsis mitochondrial protein import apparatus and its response to mitochondrial dysfunction.</title>
        <authorList>
            <person name="Lister R."/>
            <person name="Chew O."/>
            <person name="Lee M.N."/>
            <person name="Heazlewood J.L."/>
            <person name="Clifton R."/>
            <person name="Parker K.L."/>
            <person name="Millar A.H."/>
            <person name="Whelan J."/>
        </authorList>
    </citation>
    <scope>TISSUE SPECIFICITY</scope>
    <scope>SUBCELLULAR LOCATION</scope>
    <scope>IDENTIFICATION BY MASS SPECTROMETRY</scope>
</reference>
<reference key="6">
    <citation type="journal article" date="2012" name="Mol. Cell. Proteomics">
        <title>Comparative large-scale characterisation of plant vs. mammal proteins reveals similar and idiosyncratic N-alpha acetylation features.</title>
        <authorList>
            <person name="Bienvenut W.V."/>
            <person name="Sumpton D."/>
            <person name="Martinez A."/>
            <person name="Lilla S."/>
            <person name="Espagne C."/>
            <person name="Meinnel T."/>
            <person name="Giglione C."/>
        </authorList>
    </citation>
    <scope>ACETYLATION [LARGE SCALE ANALYSIS] AT ALA-2</scope>
    <scope>CLEAVAGE OF INITIATOR METHIONINE [LARGE SCALE ANALYSIS]</scope>
    <scope>IDENTIFICATION BY MASS SPECTROMETRY [LARGE SCALE ANALYSIS]</scope>
</reference>
<dbReference type="EMBL" id="AF150093">
    <property type="protein sequence ID" value="AAD39999.1"/>
    <property type="molecule type" value="mRNA"/>
</dbReference>
<dbReference type="EMBL" id="AC004561">
    <property type="protein sequence ID" value="AAC95186.1"/>
    <property type="molecule type" value="Genomic_DNA"/>
</dbReference>
<dbReference type="EMBL" id="CP002685">
    <property type="protein sequence ID" value="AEC08266.1"/>
    <property type="molecule type" value="Genomic_DNA"/>
</dbReference>
<dbReference type="EMBL" id="CP002685">
    <property type="protein sequence ID" value="AEC08267.1"/>
    <property type="molecule type" value="Genomic_DNA"/>
</dbReference>
<dbReference type="EMBL" id="BT004739">
    <property type="protein sequence ID" value="AAO44005.1"/>
    <property type="molecule type" value="mRNA"/>
</dbReference>
<dbReference type="PIR" id="D84697">
    <property type="entry name" value="D84697"/>
</dbReference>
<dbReference type="RefSeq" id="NP_001077976.1">
    <molecule id="Q9ZW33-1"/>
    <property type="nucleotide sequence ID" value="NM_001084507.2"/>
</dbReference>
<dbReference type="RefSeq" id="NP_565682.1">
    <molecule id="Q9ZW33-1"/>
    <property type="nucleotide sequence ID" value="NM_128506.3"/>
</dbReference>
<dbReference type="SMR" id="Q9ZW33"/>
<dbReference type="BioGRID" id="2852">
    <property type="interactions" value="4"/>
</dbReference>
<dbReference type="FunCoup" id="Q9ZW33">
    <property type="interactions" value="3024"/>
</dbReference>
<dbReference type="STRING" id="3702.Q9ZW33"/>
<dbReference type="iPTMnet" id="Q9ZW33"/>
<dbReference type="MetOSite" id="Q9ZW33"/>
<dbReference type="ProteomicsDB" id="234356">
    <molecule id="Q9ZW33-1"/>
</dbReference>
<dbReference type="EnsemblPlants" id="AT2G29530.1">
    <molecule id="Q9ZW33-1"/>
    <property type="protein sequence ID" value="AT2G29530.1"/>
    <property type="gene ID" value="AT2G29530"/>
</dbReference>
<dbReference type="EnsemblPlants" id="AT2G29530.2">
    <molecule id="Q9ZW33-1"/>
    <property type="protein sequence ID" value="AT2G29530.2"/>
    <property type="gene ID" value="AT2G29530"/>
</dbReference>
<dbReference type="GeneID" id="817502"/>
<dbReference type="Gramene" id="AT2G29530.1">
    <molecule id="Q9ZW33-1"/>
    <property type="protein sequence ID" value="AT2G29530.1"/>
    <property type="gene ID" value="AT2G29530"/>
</dbReference>
<dbReference type="Gramene" id="AT2G29530.2">
    <molecule id="Q9ZW33-1"/>
    <property type="protein sequence ID" value="AT2G29530.2"/>
    <property type="gene ID" value="AT2G29530"/>
</dbReference>
<dbReference type="KEGG" id="ath:AT2G29530"/>
<dbReference type="Araport" id="AT2G29530"/>
<dbReference type="TAIR" id="AT2G29530">
    <property type="gene designation" value="TIM10"/>
</dbReference>
<dbReference type="HOGENOM" id="CLU_162151_3_0_1"/>
<dbReference type="InParanoid" id="Q9ZW33"/>
<dbReference type="OMA" id="VGENMQK"/>
<dbReference type="OrthoDB" id="274922at2759"/>
<dbReference type="PhylomeDB" id="Q9ZW33"/>
<dbReference type="CD-CODE" id="4299E36E">
    <property type="entry name" value="Nucleolus"/>
</dbReference>
<dbReference type="PRO" id="PR:Q9ZW33"/>
<dbReference type="Proteomes" id="UP000006548">
    <property type="component" value="Chromosome 2"/>
</dbReference>
<dbReference type="ExpressionAtlas" id="Q9ZW33">
    <property type="expression patterns" value="baseline and differential"/>
</dbReference>
<dbReference type="GO" id="GO:0005758">
    <property type="term" value="C:mitochondrial intermembrane space"/>
    <property type="evidence" value="ECO:0007669"/>
    <property type="project" value="UniProtKB-SubCell"/>
</dbReference>
<dbReference type="GO" id="GO:0046872">
    <property type="term" value="F:metal ion binding"/>
    <property type="evidence" value="ECO:0007669"/>
    <property type="project" value="UniProtKB-KW"/>
</dbReference>
<dbReference type="GO" id="GO:0045039">
    <property type="term" value="P:protein insertion into mitochondrial inner membrane"/>
    <property type="evidence" value="ECO:0007669"/>
    <property type="project" value="UniProtKB-ARBA"/>
</dbReference>
<dbReference type="FunFam" id="1.10.287.810:FF:000007">
    <property type="entry name" value="Mitochondrial import inner membrane translocase"/>
    <property type="match status" value="1"/>
</dbReference>
<dbReference type="Gene3D" id="1.10.287.810">
    <property type="entry name" value="Mitochondrial import inner membrane translocase subunit tim13 like domains"/>
    <property type="match status" value="1"/>
</dbReference>
<dbReference type="InterPro" id="IPR004217">
    <property type="entry name" value="Tim10-like"/>
</dbReference>
<dbReference type="InterPro" id="IPR035427">
    <property type="entry name" value="Tim10-like_dom_sf"/>
</dbReference>
<dbReference type="PANTHER" id="PTHR11038">
    <property type="entry name" value="MITOCHONDRIAL IMPORT INNER MEMBRANE TRANSLOCASE SUBUNIT TIM10"/>
    <property type="match status" value="1"/>
</dbReference>
<dbReference type="PANTHER" id="PTHR11038:SF16">
    <property type="entry name" value="MITOCHONDRIAL IMPORT INNER MEMBRANE TRANSLOCASE SUBUNIT TIM10"/>
    <property type="match status" value="1"/>
</dbReference>
<dbReference type="Pfam" id="PF02953">
    <property type="entry name" value="zf-Tim10_DDP"/>
    <property type="match status" value="1"/>
</dbReference>
<dbReference type="SUPFAM" id="SSF144122">
    <property type="entry name" value="Tim10-like"/>
    <property type="match status" value="1"/>
</dbReference>
<name>TIM10_ARATH</name>
<keyword id="KW-0007">Acetylation</keyword>
<keyword id="KW-0025">Alternative splicing</keyword>
<keyword id="KW-0143">Chaperone</keyword>
<keyword id="KW-1015">Disulfide bond</keyword>
<keyword id="KW-0479">Metal-binding</keyword>
<keyword id="KW-0496">Mitochondrion</keyword>
<keyword id="KW-0653">Protein transport</keyword>
<keyword id="KW-1185">Reference proteome</keyword>
<keyword id="KW-0811">Translocation</keyword>
<keyword id="KW-0813">Transport</keyword>
<keyword id="KW-0862">Zinc</keyword>
<comment type="function">
    <text evidence="1">Mitochondrial intermembrane chaperone that participates in the import and insertion of multi-pass transmembrane proteins into the mitochondrial inner membrane. May also be required for the transfer of beta-barrel precursors from the TOM complex to the sorting and assembly machinery (SAM complex) of the outer membrane. Acts as a chaperone-like protein that protects the hydrophobic precursors from aggregation and guide them through the mitochondrial intermembrane space (By similarity).</text>
</comment>
<comment type="subunit">
    <text evidence="1">Heterohexamer; composed of 3 copies of TIM9 and 3 copies of TIM10, named soluble 70 kDa complex. The complex associates with the TIM22 component of the TIM22 complex. Interacts with multi-pass transmembrane proteins in transit (By similarity).</text>
</comment>
<comment type="subcellular location">
    <subcellularLocation>
        <location evidence="2">Mitochondrion intermembrane space</location>
    </subcellularLocation>
</comment>
<comment type="alternative products">
    <event type="alternative splicing"/>
    <isoform>
        <id>Q9ZW33-1</id>
        <name>1</name>
        <sequence type="displayed"/>
    </isoform>
    <text>A number of isoforms are produced. According to EST sequences.</text>
</comment>
<comment type="tissue specificity">
    <text evidence="2">Expressed in roots, flowers, young cotyledons and leaves.</text>
</comment>
<comment type="domain">
    <text evidence="1">The twin CX3C motif contains 4 conserved Cys residues that form 2 disulfide bonds in the mitochondrial intermembrane space. However, during the transit of TIM10 from cytoplasm into mitochondrion, the Cys residues probably coordinate zinc, thereby preventing folding and allowing its transfer across mitochondrial outer membrane (By similarity).</text>
</comment>
<comment type="similarity">
    <text evidence="3">Belongs to the small Tim family.</text>
</comment>
<accession>Q9ZW33</accession>
<feature type="initiator methionine" description="Removed" evidence="4">
    <location>
        <position position="1"/>
    </location>
</feature>
<feature type="chain" id="PRO_0000193615" description="Mitochondrial import inner membrane translocase subunit TIM10">
    <location>
        <begin position="2"/>
        <end position="83"/>
    </location>
</feature>
<feature type="short sequence motif" description="Twin CX3C motif">
    <location>
        <begin position="36"/>
        <end position="61"/>
    </location>
</feature>
<feature type="modified residue" description="N-acetylalanine" evidence="4">
    <location>
        <position position="2"/>
    </location>
</feature>
<feature type="disulfide bond" evidence="1">
    <location>
        <begin position="36"/>
        <end position="61"/>
    </location>
</feature>
<feature type="disulfide bond" evidence="1">
    <location>
        <begin position="40"/>
        <end position="57"/>
    </location>
</feature>
<evidence type="ECO:0000250" key="1"/>
<evidence type="ECO:0000269" key="2">
    <source>
    </source>
</evidence>
<evidence type="ECO:0000305" key="3"/>
<evidence type="ECO:0007744" key="4">
    <source>
    </source>
</evidence>
<gene>
    <name type="primary">TIM10</name>
    <name type="ordered locus">At2g29530</name>
    <name type="ORF">F16P2.9</name>
</gene>
<proteinExistence type="evidence at protein level"/>
<protein>
    <recommendedName>
        <fullName>Mitochondrial import inner membrane translocase subunit TIM10</fullName>
    </recommendedName>
</protein>
<organism>
    <name type="scientific">Arabidopsis thaliana</name>
    <name type="common">Mouse-ear cress</name>
    <dbReference type="NCBI Taxonomy" id="3702"/>
    <lineage>
        <taxon>Eukaryota</taxon>
        <taxon>Viridiplantae</taxon>
        <taxon>Streptophyta</taxon>
        <taxon>Embryophyta</taxon>
        <taxon>Tracheophyta</taxon>
        <taxon>Spermatophyta</taxon>
        <taxon>Magnoliopsida</taxon>
        <taxon>eudicotyledons</taxon>
        <taxon>Gunneridae</taxon>
        <taxon>Pentapetalae</taxon>
        <taxon>rosids</taxon>
        <taxon>malvids</taxon>
        <taxon>Brassicales</taxon>
        <taxon>Brassicaceae</taxon>
        <taxon>Camelineae</taxon>
        <taxon>Arabidopsis</taxon>
    </lineage>
</organism>